<gene>
    <name evidence="1" type="primary">lis-1</name>
    <name type="ORF">CBG21225</name>
</gene>
<accession>A8XZJ9</accession>
<reference key="1">
    <citation type="journal article" date="2003" name="PLoS Biol.">
        <title>The genome sequence of Caenorhabditis briggsae: a platform for comparative genomics.</title>
        <authorList>
            <person name="Stein L.D."/>
            <person name="Bao Z."/>
            <person name="Blasiar D."/>
            <person name="Blumenthal T."/>
            <person name="Brent M.R."/>
            <person name="Chen N."/>
            <person name="Chinwalla A."/>
            <person name="Clarke L."/>
            <person name="Clee C."/>
            <person name="Coghlan A."/>
            <person name="Coulson A."/>
            <person name="D'Eustachio P."/>
            <person name="Fitch D.H.A."/>
            <person name="Fulton L.A."/>
            <person name="Fulton R.E."/>
            <person name="Griffiths-Jones S."/>
            <person name="Harris T.W."/>
            <person name="Hillier L.W."/>
            <person name="Kamath R."/>
            <person name="Kuwabara P.E."/>
            <person name="Mardis E.R."/>
            <person name="Marra M.A."/>
            <person name="Miner T.L."/>
            <person name="Minx P."/>
            <person name="Mullikin J.C."/>
            <person name="Plumb R.W."/>
            <person name="Rogers J."/>
            <person name="Schein J.E."/>
            <person name="Sohrmann M."/>
            <person name="Spieth J."/>
            <person name="Stajich J.E."/>
            <person name="Wei C."/>
            <person name="Willey D."/>
            <person name="Wilson R.K."/>
            <person name="Durbin R.M."/>
            <person name="Waterston R.H."/>
        </authorList>
    </citation>
    <scope>NUCLEOTIDE SEQUENCE [LARGE SCALE GENOMIC DNA]</scope>
    <source>
        <strain>AF16</strain>
    </source>
</reference>
<sequence>MSLSERQREEINRAVAEYLQNNGYSEAFNMLLKEASLSENDIKPLGGILEKKWTTVLRLQRKVNDLEAKLLESQQEINHGAPTRDKRQAADWIPRPPETQKLIGHRLPVTRVIFHPLWTIMASCSEDATIKVWDYETGQLEKTLKGHTDAVNDIAIDAAGKQLVSCSTDLTIKLWDFGQSYDCLKSLKGHEHTVSSVTFLPTGDFVLSASRDHTIKQWDISTGYCVFTFRGHNDWVRMIRISHDGTLFASGSLDQTVSVWSLPRKQRNWYFEIMSMRWSVSKPEGNSTHILFSGSRDRSIKAWNISTGEVIFTLSAHENWVRGLAFHPKGKYLVSVADDKMMRIWELSAQRCMKAIEAHEHFVSTVAFHQTNPYVITGSVDMSCKVWECR</sequence>
<comment type="function">
    <text evidence="1">Positively regulates the activity of the minus-end directed microtubule motor protein dynein. May enhance dynein-mediated microtubule sliding by targeting dynein to the microtubule plus end. Required for several dynein- and microtubule-dependent processes.</text>
</comment>
<comment type="subcellular location">
    <subcellularLocation>
        <location evidence="1">Cytoplasm</location>
        <location evidence="1">Cytoskeleton</location>
    </subcellularLocation>
    <subcellularLocation>
        <location evidence="1">Cytoplasm</location>
        <location evidence="1">Cytoskeleton</location>
        <location evidence="1">Microtubule organizing center</location>
        <location evidence="1">Centrosome</location>
    </subcellularLocation>
    <text evidence="1">Localizes to the plus end of microtubules and to the centrosome.</text>
</comment>
<comment type="domain">
    <text evidence="1">Dimerization mediated by the LisH domain may be required to activate dynein.</text>
</comment>
<comment type="similarity">
    <text evidence="1">Belongs to the WD repeat LIS1/nudF family.</text>
</comment>
<protein>
    <recommendedName>
        <fullName evidence="1">Lissencephaly-1 homolog</fullName>
    </recommendedName>
</protein>
<evidence type="ECO:0000255" key="1">
    <source>
        <dbReference type="HAMAP-Rule" id="MF_03141"/>
    </source>
</evidence>
<proteinExistence type="inferred from homology"/>
<feature type="chain" id="PRO_0000405054" description="Lissencephaly-1 homolog">
    <location>
        <begin position="1"/>
        <end position="390"/>
    </location>
</feature>
<feature type="domain" description="LisH" evidence="1">
    <location>
        <begin position="7"/>
        <end position="39"/>
    </location>
</feature>
<feature type="repeat" description="WD 1">
    <location>
        <begin position="104"/>
        <end position="145"/>
    </location>
</feature>
<feature type="repeat" description="WD 2">
    <location>
        <begin position="146"/>
        <end position="185"/>
    </location>
</feature>
<feature type="repeat" description="WD 3">
    <location>
        <begin position="189"/>
        <end position="228"/>
    </location>
</feature>
<feature type="repeat" description="WD 4">
    <location>
        <begin position="231"/>
        <end position="270"/>
    </location>
</feature>
<feature type="repeat" description="WD 5">
    <location>
        <begin position="272"/>
        <end position="313"/>
    </location>
</feature>
<feature type="repeat" description="WD 6">
    <location>
        <begin position="316"/>
        <end position="355"/>
    </location>
</feature>
<feature type="repeat" description="WD 7">
    <location>
        <begin position="358"/>
        <end position="390"/>
    </location>
</feature>
<feature type="coiled-coil region" evidence="1">
    <location>
        <begin position="54"/>
        <end position="80"/>
    </location>
</feature>
<dbReference type="EMBL" id="HE600921">
    <property type="protein sequence ID" value="CAP37998.2"/>
    <property type="molecule type" value="Genomic_DNA"/>
</dbReference>
<dbReference type="SMR" id="A8XZJ9"/>
<dbReference type="FunCoup" id="A8XZJ9">
    <property type="interactions" value="2925"/>
</dbReference>
<dbReference type="STRING" id="6238.A8XZJ9"/>
<dbReference type="WormBase" id="CBG21225">
    <property type="protein sequence ID" value="CBP40912"/>
    <property type="gene ID" value="WBGene00040066"/>
    <property type="gene designation" value="Cbr-lis-1"/>
</dbReference>
<dbReference type="eggNOG" id="KOG0295">
    <property type="taxonomic scope" value="Eukaryota"/>
</dbReference>
<dbReference type="HOGENOM" id="CLU_000288_57_15_1"/>
<dbReference type="InParanoid" id="A8XZJ9"/>
<dbReference type="OMA" id="WHVATKE"/>
<dbReference type="Proteomes" id="UP000008549">
    <property type="component" value="Unassembled WGS sequence"/>
</dbReference>
<dbReference type="GO" id="GO:1904115">
    <property type="term" value="C:axon cytoplasm"/>
    <property type="evidence" value="ECO:0007669"/>
    <property type="project" value="GOC"/>
</dbReference>
<dbReference type="GO" id="GO:0005813">
    <property type="term" value="C:centrosome"/>
    <property type="evidence" value="ECO:0007669"/>
    <property type="project" value="UniProtKB-SubCell"/>
</dbReference>
<dbReference type="GO" id="GO:0005881">
    <property type="term" value="C:cytoplasmic microtubule"/>
    <property type="evidence" value="ECO:0000318"/>
    <property type="project" value="GO_Central"/>
</dbReference>
<dbReference type="GO" id="GO:0000776">
    <property type="term" value="C:kinetochore"/>
    <property type="evidence" value="ECO:0000318"/>
    <property type="project" value="GO_Central"/>
</dbReference>
<dbReference type="GO" id="GO:0005875">
    <property type="term" value="C:microtubule associated complex"/>
    <property type="evidence" value="ECO:0000318"/>
    <property type="project" value="GO_Central"/>
</dbReference>
<dbReference type="GO" id="GO:0043005">
    <property type="term" value="C:neuron projection"/>
    <property type="evidence" value="ECO:0000318"/>
    <property type="project" value="GO_Central"/>
</dbReference>
<dbReference type="GO" id="GO:0043025">
    <property type="term" value="C:neuronal cell body"/>
    <property type="evidence" value="ECO:0000318"/>
    <property type="project" value="GO_Central"/>
</dbReference>
<dbReference type="GO" id="GO:0005635">
    <property type="term" value="C:nuclear envelope"/>
    <property type="evidence" value="ECO:0000318"/>
    <property type="project" value="GO_Central"/>
</dbReference>
<dbReference type="GO" id="GO:0070840">
    <property type="term" value="F:dynein complex binding"/>
    <property type="evidence" value="ECO:0000318"/>
    <property type="project" value="GO_Central"/>
</dbReference>
<dbReference type="GO" id="GO:0051010">
    <property type="term" value="F:microtubule plus-end binding"/>
    <property type="evidence" value="ECO:0000318"/>
    <property type="project" value="GO_Central"/>
</dbReference>
<dbReference type="GO" id="GO:0048854">
    <property type="term" value="P:brain morphogenesis"/>
    <property type="evidence" value="ECO:0000318"/>
    <property type="project" value="GO_Central"/>
</dbReference>
<dbReference type="GO" id="GO:0051301">
    <property type="term" value="P:cell division"/>
    <property type="evidence" value="ECO:0007669"/>
    <property type="project" value="UniProtKB-KW"/>
</dbReference>
<dbReference type="GO" id="GO:0000132">
    <property type="term" value="P:establishment of mitotic spindle orientation"/>
    <property type="evidence" value="ECO:0000318"/>
    <property type="project" value="GO_Central"/>
</dbReference>
<dbReference type="GO" id="GO:0007281">
    <property type="term" value="P:germ cell development"/>
    <property type="evidence" value="ECO:0000318"/>
    <property type="project" value="GO_Central"/>
</dbReference>
<dbReference type="GO" id="GO:0031023">
    <property type="term" value="P:microtubule organizing center organization"/>
    <property type="evidence" value="ECO:0000318"/>
    <property type="project" value="GO_Central"/>
</dbReference>
<dbReference type="GO" id="GO:0051012">
    <property type="term" value="P:microtubule sliding"/>
    <property type="evidence" value="ECO:0007669"/>
    <property type="project" value="UniProtKB-UniRule"/>
</dbReference>
<dbReference type="GO" id="GO:0007097">
    <property type="term" value="P:nuclear migration"/>
    <property type="evidence" value="ECO:0000318"/>
    <property type="project" value="GO_Central"/>
</dbReference>
<dbReference type="GO" id="GO:0008090">
    <property type="term" value="P:retrograde axonal transport"/>
    <property type="evidence" value="ECO:0000318"/>
    <property type="project" value="GO_Central"/>
</dbReference>
<dbReference type="GO" id="GO:0047496">
    <property type="term" value="P:vesicle transport along microtubule"/>
    <property type="evidence" value="ECO:0000318"/>
    <property type="project" value="GO_Central"/>
</dbReference>
<dbReference type="CDD" id="cd00200">
    <property type="entry name" value="WD40"/>
    <property type="match status" value="1"/>
</dbReference>
<dbReference type="FunFam" id="1.20.960.30:FF:000002">
    <property type="entry name" value="Platelet-activating factor acetylhydrolase ib"/>
    <property type="match status" value="1"/>
</dbReference>
<dbReference type="Gene3D" id="1.20.960.30">
    <property type="match status" value="1"/>
</dbReference>
<dbReference type="Gene3D" id="2.130.10.10">
    <property type="entry name" value="YVTN repeat-like/Quinoprotein amine dehydrogenase"/>
    <property type="match status" value="1"/>
</dbReference>
<dbReference type="HAMAP" id="MF_03141">
    <property type="entry name" value="lis1"/>
    <property type="match status" value="1"/>
</dbReference>
<dbReference type="InterPro" id="IPR017252">
    <property type="entry name" value="Dynein_regulator_LIS1"/>
</dbReference>
<dbReference type="InterPro" id="IPR020472">
    <property type="entry name" value="G-protein_beta_WD-40_rep"/>
</dbReference>
<dbReference type="InterPro" id="IPR037190">
    <property type="entry name" value="LIS1_N"/>
</dbReference>
<dbReference type="InterPro" id="IPR006594">
    <property type="entry name" value="LisH"/>
</dbReference>
<dbReference type="InterPro" id="IPR056795">
    <property type="entry name" value="PAC1-like_LisH-like_dom"/>
</dbReference>
<dbReference type="InterPro" id="IPR015943">
    <property type="entry name" value="WD40/YVTN_repeat-like_dom_sf"/>
</dbReference>
<dbReference type="InterPro" id="IPR019775">
    <property type="entry name" value="WD40_repeat_CS"/>
</dbReference>
<dbReference type="InterPro" id="IPR036322">
    <property type="entry name" value="WD40_repeat_dom_sf"/>
</dbReference>
<dbReference type="InterPro" id="IPR001680">
    <property type="entry name" value="WD40_rpt"/>
</dbReference>
<dbReference type="PANTHER" id="PTHR19879">
    <property type="entry name" value="TRANSCRIPTION INITIATION FACTOR TFIID"/>
    <property type="match status" value="1"/>
</dbReference>
<dbReference type="PANTHER" id="PTHR19879:SF9">
    <property type="entry name" value="TRANSCRIPTION INITIATION FACTOR TFIID SUBUNIT 5"/>
    <property type="match status" value="1"/>
</dbReference>
<dbReference type="Pfam" id="PF24951">
    <property type="entry name" value="LisH_PAC1"/>
    <property type="match status" value="1"/>
</dbReference>
<dbReference type="Pfam" id="PF00400">
    <property type="entry name" value="WD40"/>
    <property type="match status" value="6"/>
</dbReference>
<dbReference type="PIRSF" id="PIRSF037647">
    <property type="entry name" value="Dynein_regulator_Lis1"/>
    <property type="match status" value="1"/>
</dbReference>
<dbReference type="PRINTS" id="PR00320">
    <property type="entry name" value="GPROTEINBRPT"/>
</dbReference>
<dbReference type="SMART" id="SM00667">
    <property type="entry name" value="LisH"/>
    <property type="match status" value="1"/>
</dbReference>
<dbReference type="SMART" id="SM00320">
    <property type="entry name" value="WD40"/>
    <property type="match status" value="7"/>
</dbReference>
<dbReference type="SUPFAM" id="SSF109925">
    <property type="entry name" value="Lissencephaly-1 protein (Lis-1, PAF-AH alpha) N-terminal domain"/>
    <property type="match status" value="1"/>
</dbReference>
<dbReference type="SUPFAM" id="SSF50978">
    <property type="entry name" value="WD40 repeat-like"/>
    <property type="match status" value="1"/>
</dbReference>
<dbReference type="PROSITE" id="PS50896">
    <property type="entry name" value="LISH"/>
    <property type="match status" value="1"/>
</dbReference>
<dbReference type="PROSITE" id="PS00678">
    <property type="entry name" value="WD_REPEATS_1"/>
    <property type="match status" value="4"/>
</dbReference>
<dbReference type="PROSITE" id="PS50082">
    <property type="entry name" value="WD_REPEATS_2"/>
    <property type="match status" value="7"/>
</dbReference>
<dbReference type="PROSITE" id="PS50294">
    <property type="entry name" value="WD_REPEATS_REGION"/>
    <property type="match status" value="1"/>
</dbReference>
<name>LIS1_CAEBR</name>
<keyword id="KW-0131">Cell cycle</keyword>
<keyword id="KW-0132">Cell division</keyword>
<keyword id="KW-0175">Coiled coil</keyword>
<keyword id="KW-0963">Cytoplasm</keyword>
<keyword id="KW-0206">Cytoskeleton</keyword>
<keyword id="KW-0493">Microtubule</keyword>
<keyword id="KW-0498">Mitosis</keyword>
<keyword id="KW-1185">Reference proteome</keyword>
<keyword id="KW-0677">Repeat</keyword>
<keyword id="KW-0813">Transport</keyword>
<keyword id="KW-0853">WD repeat</keyword>
<organism>
    <name type="scientific">Caenorhabditis briggsae</name>
    <dbReference type="NCBI Taxonomy" id="6238"/>
    <lineage>
        <taxon>Eukaryota</taxon>
        <taxon>Metazoa</taxon>
        <taxon>Ecdysozoa</taxon>
        <taxon>Nematoda</taxon>
        <taxon>Chromadorea</taxon>
        <taxon>Rhabditida</taxon>
        <taxon>Rhabditina</taxon>
        <taxon>Rhabditomorpha</taxon>
        <taxon>Rhabditoidea</taxon>
        <taxon>Rhabditidae</taxon>
        <taxon>Peloderinae</taxon>
        <taxon>Caenorhabditis</taxon>
    </lineage>
</organism>